<dbReference type="EMBL" id="AE000516">
    <property type="protein sequence ID" value="AAK44993.1"/>
    <property type="molecule type" value="Genomic_DNA"/>
</dbReference>
<dbReference type="RefSeq" id="WP_003403731.1">
    <property type="nucleotide sequence ID" value="NZ_KK341227.1"/>
</dbReference>
<dbReference type="SMR" id="P9WGH4"/>
<dbReference type="GeneID" id="45424700"/>
<dbReference type="KEGG" id="mtc:MT0759"/>
<dbReference type="PATRIC" id="fig|83331.31.peg.813"/>
<dbReference type="HOGENOM" id="CLU_047691_9_4_11"/>
<dbReference type="Proteomes" id="UP000001020">
    <property type="component" value="Chromosome"/>
</dbReference>
<dbReference type="GO" id="GO:0003677">
    <property type="term" value="F:DNA binding"/>
    <property type="evidence" value="ECO:0007669"/>
    <property type="project" value="UniProtKB-KW"/>
</dbReference>
<dbReference type="GO" id="GO:0016987">
    <property type="term" value="F:sigma factor activity"/>
    <property type="evidence" value="ECO:0007669"/>
    <property type="project" value="UniProtKB-KW"/>
</dbReference>
<dbReference type="GO" id="GO:0006352">
    <property type="term" value="P:DNA-templated transcription initiation"/>
    <property type="evidence" value="ECO:0007669"/>
    <property type="project" value="InterPro"/>
</dbReference>
<dbReference type="CDD" id="cd06171">
    <property type="entry name" value="Sigma70_r4"/>
    <property type="match status" value="1"/>
</dbReference>
<dbReference type="FunFam" id="1.10.10.10:FF:000669">
    <property type="entry name" value="RNA polymerase sigma factor"/>
    <property type="match status" value="1"/>
</dbReference>
<dbReference type="Gene3D" id="1.10.1740.10">
    <property type="match status" value="1"/>
</dbReference>
<dbReference type="Gene3D" id="1.10.10.10">
    <property type="entry name" value="Winged helix-like DNA-binding domain superfamily/Winged helix DNA-binding domain"/>
    <property type="match status" value="1"/>
</dbReference>
<dbReference type="InterPro" id="IPR039425">
    <property type="entry name" value="RNA_pol_sigma-70-like"/>
</dbReference>
<dbReference type="InterPro" id="IPR014284">
    <property type="entry name" value="RNA_pol_sigma-70_dom"/>
</dbReference>
<dbReference type="InterPro" id="IPR000838">
    <property type="entry name" value="RNA_pol_sigma70_ECF_CS"/>
</dbReference>
<dbReference type="InterPro" id="IPR007627">
    <property type="entry name" value="RNA_pol_sigma70_r2"/>
</dbReference>
<dbReference type="InterPro" id="IPR007630">
    <property type="entry name" value="RNA_pol_sigma70_r4"/>
</dbReference>
<dbReference type="InterPro" id="IPR013325">
    <property type="entry name" value="RNA_pol_sigma_r2"/>
</dbReference>
<dbReference type="InterPro" id="IPR013324">
    <property type="entry name" value="RNA_pol_sigma_r3/r4-like"/>
</dbReference>
<dbReference type="InterPro" id="IPR036388">
    <property type="entry name" value="WH-like_DNA-bd_sf"/>
</dbReference>
<dbReference type="NCBIfam" id="NF007227">
    <property type="entry name" value="PRK09645.1"/>
    <property type="match status" value="1"/>
</dbReference>
<dbReference type="NCBIfam" id="TIGR02937">
    <property type="entry name" value="sigma70-ECF"/>
    <property type="match status" value="1"/>
</dbReference>
<dbReference type="PANTHER" id="PTHR43133:SF52">
    <property type="entry name" value="ECF RNA POLYMERASE SIGMA FACTOR SIGL"/>
    <property type="match status" value="1"/>
</dbReference>
<dbReference type="PANTHER" id="PTHR43133">
    <property type="entry name" value="RNA POLYMERASE ECF-TYPE SIGMA FACTO"/>
    <property type="match status" value="1"/>
</dbReference>
<dbReference type="Pfam" id="PF04542">
    <property type="entry name" value="Sigma70_r2"/>
    <property type="match status" value="1"/>
</dbReference>
<dbReference type="Pfam" id="PF04545">
    <property type="entry name" value="Sigma70_r4"/>
    <property type="match status" value="1"/>
</dbReference>
<dbReference type="SUPFAM" id="SSF88946">
    <property type="entry name" value="Sigma2 domain of RNA polymerase sigma factors"/>
    <property type="match status" value="1"/>
</dbReference>
<dbReference type="SUPFAM" id="SSF88659">
    <property type="entry name" value="Sigma3 and sigma4 domains of RNA polymerase sigma factors"/>
    <property type="match status" value="1"/>
</dbReference>
<dbReference type="PROSITE" id="PS01063">
    <property type="entry name" value="SIGMA70_ECF"/>
    <property type="match status" value="1"/>
</dbReference>
<comment type="function">
    <text>Sigma factors are initiation factors that promote the attachment of RNA polymerase to specific initiation sites and are then released. Extracytoplasmic function (ECF) sigma factors are held in an inactive form by an anti-sigma factor until released by regulated intramembrane proteolysis.</text>
</comment>
<comment type="subunit">
    <text evidence="1">Interacts transiently with the RNA polymerase catalytic core formed by RpoA, RpoB, RpoC and RpoZ (2 alpha, 1 beta, 1 beta' and 1 omega subunit) to form the RNA polymerase holoenzyme that can initiate transcription.</text>
</comment>
<comment type="domain">
    <text evidence="1">The sigma-70 factor domain-2 mediates sequence-specific interaction with the -10 element in promoter DNA, and plays an important role in melting the double-stranded DNA and the formation of the transcription bubble. The sigma-70 factor domain-2 mediates interaction with the RNA polymerase subunits RpoB and RpoC (By similarity).</text>
</comment>
<comment type="domain">
    <text evidence="3">The sigma-70 factor domain-4 contains a helix-turn-helix (H-T-H) motif that mediates interaction with the -35 element in promoter DNA. The domain also mediates interaction with the RNA polymerase subunit RpoA. Interactions between sigma-70 factor domain-4 and anti-sigma factors prevents interaction of sigma factors with the RNA polymerase catalytic core (Probable).</text>
</comment>
<comment type="miscellaneous">
    <text evidence="1">Extracytoplasmic function (ECF) sigma factors are held in an inactive form by an anti-sigma factor until released by regulated intramembrane proteolysis (RIP). RIP occurs when an extracytoplasmic signal triggers a concerted proteolytic cascade to transmit information and elicit cellular responses. The membrane-spanning anti-sigma factor is first cut extracytoplasmically (site-1 protease, S1P), then within the membrane itself (site-2 protease, S2P, Rip1), while cytoplasmic proteases finish degrading the regulatory protein, liberating SigL (By similarity).</text>
</comment>
<comment type="similarity">
    <text evidence="3">Belongs to the sigma-70 factor family. ECF subfamily.</text>
</comment>
<feature type="chain" id="PRO_0000428361" description="ECF RNA polymerase sigma factor SigL">
    <location>
        <begin position="1"/>
        <end position="177"/>
    </location>
</feature>
<feature type="DNA-binding region" description="H-T-H motif" evidence="2">
    <location>
        <begin position="141"/>
        <end position="160"/>
    </location>
</feature>
<feature type="region of interest" description="Sigma-70 factor domain-2">
    <location>
        <begin position="18"/>
        <end position="85"/>
    </location>
</feature>
<feature type="region of interest" description="Sigma-70 factor domain-4">
    <location>
        <begin position="119"/>
        <end position="167"/>
    </location>
</feature>
<feature type="short sequence motif" description="Interaction with polymerase core subunit RpoC" evidence="1">
    <location>
        <begin position="42"/>
        <end position="45"/>
    </location>
</feature>
<proteinExistence type="inferred from homology"/>
<organism>
    <name type="scientific">Mycobacterium tuberculosis (strain CDC 1551 / Oshkosh)</name>
    <dbReference type="NCBI Taxonomy" id="83331"/>
    <lineage>
        <taxon>Bacteria</taxon>
        <taxon>Bacillati</taxon>
        <taxon>Actinomycetota</taxon>
        <taxon>Actinomycetes</taxon>
        <taxon>Mycobacteriales</taxon>
        <taxon>Mycobacteriaceae</taxon>
        <taxon>Mycobacterium</taxon>
        <taxon>Mycobacterium tuberculosis complex</taxon>
    </lineage>
</organism>
<protein>
    <recommendedName>
        <fullName>ECF RNA polymerase sigma factor SigL</fullName>
        <shortName>ECF sigma factor SigL</shortName>
    </recommendedName>
    <alternativeName>
        <fullName>Alternative RNA polymerase sigma factor SigL</fullName>
    </alternativeName>
    <alternativeName>
        <fullName>RNA polymerase sigma-L factor</fullName>
        <shortName>Sigma-L factor</shortName>
    </alternativeName>
</protein>
<reference key="1">
    <citation type="journal article" date="2002" name="J. Bacteriol.">
        <title>Whole-genome comparison of Mycobacterium tuberculosis clinical and laboratory strains.</title>
        <authorList>
            <person name="Fleischmann R.D."/>
            <person name="Alland D."/>
            <person name="Eisen J.A."/>
            <person name="Carpenter L."/>
            <person name="White O."/>
            <person name="Peterson J.D."/>
            <person name="DeBoy R.T."/>
            <person name="Dodson R.J."/>
            <person name="Gwinn M.L."/>
            <person name="Haft D.H."/>
            <person name="Hickey E.K."/>
            <person name="Kolonay J.F."/>
            <person name="Nelson W.C."/>
            <person name="Umayam L.A."/>
            <person name="Ermolaeva M.D."/>
            <person name="Salzberg S.L."/>
            <person name="Delcher A."/>
            <person name="Utterback T.R."/>
            <person name="Weidman J.F."/>
            <person name="Khouri H.M."/>
            <person name="Gill J."/>
            <person name="Mikula A."/>
            <person name="Bishai W."/>
            <person name="Jacobs W.R. Jr."/>
            <person name="Venter J.C."/>
            <person name="Fraser C.M."/>
        </authorList>
    </citation>
    <scope>NUCLEOTIDE SEQUENCE [LARGE SCALE GENOMIC DNA]</scope>
    <source>
        <strain>CDC 1551 / Oshkosh</strain>
    </source>
</reference>
<sequence>MARVSGAAAAEAALMRALYDEHAAVLWRYALRLTGDAAQAEDVVQETLLRAWQHPEVIGDTARPARAWLFTVARNMIIDERRSARFRNVVGSTDQSGTPEQSTPDEVNAALDRLLIADALAQLSAEHRAVIQRSYYRGWSTAQIATDLGIAEGTVKSRLHYAVRALRLTLQELGVTR</sequence>
<accession>P9WGH4</accession>
<accession>F2GMW0</accession>
<accession>Q7ARS1</accession>
<accession>Q7D9D4</accession>
<name>SIGL_MYCTO</name>
<keyword id="KW-0238">DNA-binding</keyword>
<keyword id="KW-1185">Reference proteome</keyword>
<keyword id="KW-0731">Sigma factor</keyword>
<keyword id="KW-0804">Transcription</keyword>
<keyword id="KW-0805">Transcription regulation</keyword>
<keyword id="KW-0843">Virulence</keyword>
<gene>
    <name type="primary">sigL</name>
    <name type="ordered locus">MT0759</name>
</gene>
<evidence type="ECO:0000250" key="1"/>
<evidence type="ECO:0000255" key="2"/>
<evidence type="ECO:0000305" key="3"/>